<gene>
    <name evidence="1" type="primary">rlmH</name>
    <name type="ordered locus">MGAS2096_Spy1896</name>
</gene>
<protein>
    <recommendedName>
        <fullName evidence="1">Ribosomal RNA large subunit methyltransferase H</fullName>
        <ecNumber evidence="1">2.1.1.177</ecNumber>
    </recommendedName>
    <alternativeName>
        <fullName evidence="1">23S rRNA (pseudouridine1915-N3)-methyltransferase</fullName>
    </alternativeName>
    <alternativeName>
        <fullName evidence="1">23S rRNA m3Psi1915 methyltransferase</fullName>
    </alternativeName>
    <alternativeName>
        <fullName evidence="1">rRNA (pseudouridine-N3-)-methyltransferase RlmH</fullName>
    </alternativeName>
</protein>
<evidence type="ECO:0000255" key="1">
    <source>
        <dbReference type="HAMAP-Rule" id="MF_00658"/>
    </source>
</evidence>
<proteinExistence type="inferred from homology"/>
<feature type="chain" id="PRO_0000260618" description="Ribosomal RNA large subunit methyltransferase H">
    <location>
        <begin position="1"/>
        <end position="159"/>
    </location>
</feature>
<feature type="binding site" evidence="1">
    <location>
        <position position="76"/>
    </location>
    <ligand>
        <name>S-adenosyl-L-methionine</name>
        <dbReference type="ChEBI" id="CHEBI:59789"/>
    </ligand>
</feature>
<feature type="binding site" evidence="1">
    <location>
        <position position="108"/>
    </location>
    <ligand>
        <name>S-adenosyl-L-methionine</name>
        <dbReference type="ChEBI" id="CHEBI:59789"/>
    </ligand>
</feature>
<feature type="binding site" evidence="1">
    <location>
        <begin position="127"/>
        <end position="132"/>
    </location>
    <ligand>
        <name>S-adenosyl-L-methionine</name>
        <dbReference type="ChEBI" id="CHEBI:59789"/>
    </ligand>
</feature>
<sequence>MKVKLICVGKLKERYLKDGISEYQKRLSRFCQFEMIELTDERTPDKASFADNQLIMSKEAQRIHKKIEERDFVIALAIEGKQFPSETFSELISGVTVKGYSTITFIIGGSLGLDSIIKKRANMLMSFGLLTLPHQLMRLVLTEQIYRAFMITQGSPYHK</sequence>
<name>RLMH_STRPB</name>
<accession>Q1J963</accession>
<reference key="1">
    <citation type="journal article" date="2006" name="Proc. Natl. Acad. Sci. U.S.A.">
        <title>Molecular genetic anatomy of inter- and intraserotype variation in the human bacterial pathogen group A Streptococcus.</title>
        <authorList>
            <person name="Beres S.B."/>
            <person name="Richter E.W."/>
            <person name="Nagiec M.J."/>
            <person name="Sumby P."/>
            <person name="Porcella S.F."/>
            <person name="DeLeo F.R."/>
            <person name="Musser J.M."/>
        </authorList>
    </citation>
    <scope>NUCLEOTIDE SEQUENCE [LARGE SCALE GENOMIC DNA]</scope>
    <source>
        <strain>MGAS2096</strain>
    </source>
</reference>
<organism>
    <name type="scientific">Streptococcus pyogenes serotype M12 (strain MGAS2096)</name>
    <dbReference type="NCBI Taxonomy" id="370553"/>
    <lineage>
        <taxon>Bacteria</taxon>
        <taxon>Bacillati</taxon>
        <taxon>Bacillota</taxon>
        <taxon>Bacilli</taxon>
        <taxon>Lactobacillales</taxon>
        <taxon>Streptococcaceae</taxon>
        <taxon>Streptococcus</taxon>
    </lineage>
</organism>
<comment type="function">
    <text evidence="1">Specifically methylates the pseudouridine at position 1915 (m3Psi1915) in 23S rRNA.</text>
</comment>
<comment type="catalytic activity">
    <reaction evidence="1">
        <text>pseudouridine(1915) in 23S rRNA + S-adenosyl-L-methionine = N(3)-methylpseudouridine(1915) in 23S rRNA + S-adenosyl-L-homocysteine + H(+)</text>
        <dbReference type="Rhea" id="RHEA:42752"/>
        <dbReference type="Rhea" id="RHEA-COMP:10221"/>
        <dbReference type="Rhea" id="RHEA-COMP:10222"/>
        <dbReference type="ChEBI" id="CHEBI:15378"/>
        <dbReference type="ChEBI" id="CHEBI:57856"/>
        <dbReference type="ChEBI" id="CHEBI:59789"/>
        <dbReference type="ChEBI" id="CHEBI:65314"/>
        <dbReference type="ChEBI" id="CHEBI:74486"/>
        <dbReference type="EC" id="2.1.1.177"/>
    </reaction>
</comment>
<comment type="subunit">
    <text evidence="1">Homodimer.</text>
</comment>
<comment type="subcellular location">
    <subcellularLocation>
        <location evidence="1">Cytoplasm</location>
    </subcellularLocation>
</comment>
<comment type="similarity">
    <text evidence="1">Belongs to the RNA methyltransferase RlmH family.</text>
</comment>
<dbReference type="EC" id="2.1.1.177" evidence="1"/>
<dbReference type="EMBL" id="CP000261">
    <property type="protein sequence ID" value="ABF36948.1"/>
    <property type="molecule type" value="Genomic_DNA"/>
</dbReference>
<dbReference type="SMR" id="Q1J963"/>
<dbReference type="KEGG" id="spj:MGAS2096_Spy1896"/>
<dbReference type="HOGENOM" id="CLU_100552_0_0_9"/>
<dbReference type="GO" id="GO:0005737">
    <property type="term" value="C:cytoplasm"/>
    <property type="evidence" value="ECO:0007669"/>
    <property type="project" value="UniProtKB-SubCell"/>
</dbReference>
<dbReference type="GO" id="GO:0070038">
    <property type="term" value="F:rRNA (pseudouridine-N3-)-methyltransferase activity"/>
    <property type="evidence" value="ECO:0007669"/>
    <property type="project" value="UniProtKB-UniRule"/>
</dbReference>
<dbReference type="CDD" id="cd18081">
    <property type="entry name" value="RlmH-like"/>
    <property type="match status" value="1"/>
</dbReference>
<dbReference type="Gene3D" id="3.40.1280.10">
    <property type="match status" value="1"/>
</dbReference>
<dbReference type="HAMAP" id="MF_00658">
    <property type="entry name" value="23SrRNA_methyltr_H"/>
    <property type="match status" value="1"/>
</dbReference>
<dbReference type="InterPro" id="IPR029028">
    <property type="entry name" value="Alpha/beta_knot_MTases"/>
</dbReference>
<dbReference type="InterPro" id="IPR003742">
    <property type="entry name" value="RlmH-like"/>
</dbReference>
<dbReference type="InterPro" id="IPR029026">
    <property type="entry name" value="tRNA_m1G_MTases_N"/>
</dbReference>
<dbReference type="NCBIfam" id="NF000985">
    <property type="entry name" value="PRK00103.1-3"/>
    <property type="match status" value="1"/>
</dbReference>
<dbReference type="NCBIfam" id="TIGR00246">
    <property type="entry name" value="tRNA_RlmH_YbeA"/>
    <property type="match status" value="1"/>
</dbReference>
<dbReference type="PANTHER" id="PTHR33603">
    <property type="entry name" value="METHYLTRANSFERASE"/>
    <property type="match status" value="1"/>
</dbReference>
<dbReference type="PANTHER" id="PTHR33603:SF1">
    <property type="entry name" value="RIBOSOMAL RNA LARGE SUBUNIT METHYLTRANSFERASE H"/>
    <property type="match status" value="1"/>
</dbReference>
<dbReference type="Pfam" id="PF02590">
    <property type="entry name" value="SPOUT_MTase"/>
    <property type="match status" value="1"/>
</dbReference>
<dbReference type="PIRSF" id="PIRSF004505">
    <property type="entry name" value="MT_bac"/>
    <property type="match status" value="1"/>
</dbReference>
<dbReference type="SUPFAM" id="SSF75217">
    <property type="entry name" value="alpha/beta knot"/>
    <property type="match status" value="1"/>
</dbReference>
<keyword id="KW-0963">Cytoplasm</keyword>
<keyword id="KW-0489">Methyltransferase</keyword>
<keyword id="KW-0698">rRNA processing</keyword>
<keyword id="KW-0949">S-adenosyl-L-methionine</keyword>
<keyword id="KW-0808">Transferase</keyword>